<keyword id="KW-0002">3D-structure</keyword>
<keyword id="KW-0007">Acetylation</keyword>
<keyword id="KW-0025">Alternative splicing</keyword>
<keyword id="KW-0343">GTPase activation</keyword>
<keyword id="KW-0597">Phosphoprotein</keyword>
<keyword id="KW-0653">Protein transport</keyword>
<keyword id="KW-1185">Reference proteome</keyword>
<keyword id="KW-0677">Repeat</keyword>
<keyword id="KW-0727">SH2 domain</keyword>
<keyword id="KW-0728">SH3 domain</keyword>
<keyword id="KW-0346">Stress response</keyword>
<keyword id="KW-0813">Transport</keyword>
<keyword id="KW-0832">Ubl conjugation</keyword>
<name>P85A_RAT</name>
<sequence length="724" mass="83531">MSAEGYQYRALYDYKKEREEDIDLHLGDILTVNKGSLVALGFSDGQEARPEDIGWLNGYNETTGERGDFPGTYVEYIGRKRISPPTPKPRPPRPLPVAPGSSKTEADTEQPVLTLPDLAEQFAPPDVAPPLLIKLLEAIEKKGLECSTLYRTQSSSNPAELRQLLDCDPPSVDLDVFDEHVLADAFKRYLADLPNPVIPVAVYNEMMSLAQEVPSSEDYIQLLKKLIRSPNIPHQYWLTLQYLLKHFFKLSQASSKNLLNARALSEIFSHVLFRFPAASSDNTEHLIKAVELLISAEWSERQPAPALPPKPPKPTSIANNSMNNNMSLQDAEWYWGDISREEVNEKLRDTADGTFLVRDASTKMHGDYTLTLRKGGNNKLIKIFHRDGKYGFSDPLTFNSVVELINHYRNESLAQYNPKLDVKLLYPVSKYQQDQVVKEDNIEAVGKKLHEYNTQFQEKSREYDRLYEEYTRTSQEIQMKRTAIEAFNDTIKIFEEQCHPQERYSKDYIEKFKREGNEKEIQRIMHNHDKLKSRISEIIDSRRRLEEDLKKQAAEYREIDKRMNSIKPDLIQLRKTRDQYLMWLTQKGVRQKKLNEWLGNENTEDQYSLVDDDEDLPHHDEKTWNVGSSNRNKAENLLRGKRDGTFLVRESSKQGCYACSVVVDGEVKHCVINKTATGYGFAEPYNLYSSLKELVLHYQHTSLVQHNDSLNVTLAYPVYAQQRR</sequence>
<accession>Q63787</accession>
<accession>O55085</accession>
<accession>P70544</accession>
<accession>Q63790</accession>
<organism>
    <name type="scientific">Rattus norvegicus</name>
    <name type="common">Rat</name>
    <dbReference type="NCBI Taxonomy" id="10116"/>
    <lineage>
        <taxon>Eukaryota</taxon>
        <taxon>Metazoa</taxon>
        <taxon>Chordata</taxon>
        <taxon>Craniata</taxon>
        <taxon>Vertebrata</taxon>
        <taxon>Euteleostomi</taxon>
        <taxon>Mammalia</taxon>
        <taxon>Eutheria</taxon>
        <taxon>Euarchontoglires</taxon>
        <taxon>Glires</taxon>
        <taxon>Rodentia</taxon>
        <taxon>Myomorpha</taxon>
        <taxon>Muroidea</taxon>
        <taxon>Muridae</taxon>
        <taxon>Murinae</taxon>
        <taxon>Rattus</taxon>
    </lineage>
</organism>
<feature type="initiator methionine" description="Removed" evidence="4">
    <location>
        <position position="1"/>
    </location>
</feature>
<feature type="chain" id="PRO_0000080760" description="Phosphatidylinositol 3-kinase regulatory subunit alpha">
    <location>
        <begin position="2"/>
        <end position="724"/>
    </location>
</feature>
<feature type="domain" description="SH3" evidence="7">
    <location>
        <begin position="3"/>
        <end position="79"/>
    </location>
</feature>
<feature type="domain" description="Rho-GAP" evidence="5">
    <location>
        <begin position="113"/>
        <end position="301"/>
    </location>
</feature>
<feature type="domain" description="SH2 1" evidence="6">
    <location>
        <begin position="333"/>
        <end position="428"/>
    </location>
</feature>
<feature type="domain" description="SH2 2" evidence="6">
    <location>
        <begin position="624"/>
        <end position="718"/>
    </location>
</feature>
<feature type="region of interest" description="Disordered" evidence="8">
    <location>
        <begin position="80"/>
        <end position="109"/>
    </location>
</feature>
<feature type="compositionally biased region" description="Pro residues" evidence="8">
    <location>
        <begin position="84"/>
        <end position="97"/>
    </location>
</feature>
<feature type="site" description="Arginine finger; crucial for GTP hydrolysis by stabilizing the transition state" evidence="5">
    <location>
        <position position="151"/>
    </location>
</feature>
<feature type="modified residue" description="N-acetylserine" evidence="4">
    <location>
        <position position="2"/>
    </location>
</feature>
<feature type="modified residue" description="Phosphoserine" evidence="4">
    <location>
        <position position="154"/>
    </location>
</feature>
<feature type="modified residue" description="Phosphoserine" evidence="4">
    <location>
        <position position="279"/>
    </location>
</feature>
<feature type="modified residue" description="Phosphotyrosine" evidence="3">
    <location>
        <position position="467"/>
    </location>
</feature>
<feature type="modified residue" description="Phosphotyrosine" evidence="4">
    <location>
        <position position="580"/>
    </location>
</feature>
<feature type="modified residue" description="Phosphoserine" evidence="2">
    <location>
        <position position="608"/>
    </location>
</feature>
<feature type="splice variant" id="VSP_004711" description="In isoform p50-alpha." evidence="12 13">
    <location>
        <begin position="1"/>
        <end position="300"/>
    </location>
</feature>
<feature type="splice variant" id="VSP_004709" description="In isoform p55-alpha." evidence="11">
    <location>
        <begin position="1"/>
        <end position="270"/>
    </location>
</feature>
<feature type="splice variant" id="VSP_004710" description="In isoform p55-alpha." evidence="11">
    <original>VLFRFPAASSDNTEHLIKAVELLISAEWSERQPA</original>
    <variation>MYTTVWTMEDLDLECAKTDINCGTDLMFYIEMDP</variation>
    <location>
        <begin position="271"/>
        <end position="304"/>
    </location>
</feature>
<feature type="splice variant" id="VSP_004712" description="In isoform p50-alpha." evidence="12 13">
    <original>RQPAPA</original>
    <variation>MHNLQT</variation>
    <location>
        <begin position="301"/>
        <end position="306"/>
    </location>
</feature>
<feature type="strand" evidence="15">
    <location>
        <begin position="324"/>
        <end position="327"/>
    </location>
</feature>
<feature type="helix" evidence="15">
    <location>
        <begin position="340"/>
        <end position="346"/>
    </location>
</feature>
<feature type="strand" evidence="15">
    <location>
        <begin position="347"/>
        <end position="349"/>
    </location>
</feature>
<feature type="strand" evidence="16">
    <location>
        <begin position="358"/>
        <end position="360"/>
    </location>
</feature>
<feature type="strand" evidence="16">
    <location>
        <begin position="363"/>
        <end position="365"/>
    </location>
</feature>
<feature type="strand" evidence="16">
    <location>
        <begin position="371"/>
        <end position="374"/>
    </location>
</feature>
<feature type="strand" evidence="16">
    <location>
        <begin position="377"/>
        <end position="380"/>
    </location>
</feature>
<feature type="strand" evidence="15">
    <location>
        <begin position="385"/>
        <end position="393"/>
    </location>
</feature>
<feature type="helix" evidence="15">
    <location>
        <begin position="403"/>
        <end position="407"/>
    </location>
</feature>
<feature type="strand" evidence="15">
    <location>
        <begin position="408"/>
        <end position="411"/>
    </location>
</feature>
<feature type="strand" evidence="15">
    <location>
        <begin position="415"/>
        <end position="417"/>
    </location>
</feature>
<comment type="function">
    <text evidence="3 4">Binds to activated (phosphorylated) protein-Tyr kinases, through its SH2 domain, and acts as an adapter, mediating the association of the p110 catalytic unit to the plasma membrane. Necessary for the insulin-stimulated increase in glucose uptake and glycogen synthesis in insulin-sensitive tissues. Plays an important role in signaling in response to FGFR1, FGFR2, FGFR3, FGFR4, KITLG/SCF, KIT, PDGFRA and PDGFRB. Likewise, plays a role in ITGB2 signaling. Modulates the cellular response to ER stress by promoting nuclear translocation of XBP1 in a ER stress- and/or insulin-dependent manner during metabolic overloading in the liver and hence plays a role in glucose tolerance improvement (By similarity).</text>
</comment>
<comment type="subunit">
    <text evidence="2 3 4 9 10 14">Heterodimer of a regulatory subunit PIK3R1 and a p110 catalytic subunit (PIK3CA, PIK3CB or PIK3CD). Interacts (via SH2 domains) with CCDC88A/GIV (tyrosine-phosphorylated form); the interaction enables recruitment of PIK3R1 to the EGFR receptor, enhancing PI3K activity and cell migration (By similarity). Interacts with phosphorylated LAT, LAX1, TRAT1 and LIME1 upon TCR and/or activation. Interacts with phosphorylated TOM1L1. Interacts with CBLB. The SH2 domains interact with the YTHM motif of phosphorylated INSR in vitro. Also interacts with tyrosine-phosphorylated IGF1R in vitro. Interacts with CD28 and CD3Z upon T-cell activation. Interacts with NISCH, SOCS7 and HCST. Interacts with RUFY3. Interacts with AXL, FASLG, FER, FGR, HCK, KIT and BCR. Interacts with PDGFRA (tyrosine phosphorylated) and PDGFRB (tyrosine phosphorylated). Interacts (via SH2 domain) with CSF1R (tyrosine phosphorylated). Interacts with ERBB4 (phosphorylated). Interacts (via SH2 domain) with TEK/TIE2 (tyrosine phosphorylated). Interacts with LYN (via SH3 domain); this enhances enzyme activity. Interacts with NTRK1 (phosphorylated upon ligand-binding). Interacts with PIK3R2; the interaction is dissociated in an insulin-dependent manner. Interacts with XBP1; the interaction is direct and induces translocation of XBP1 into the nucleus in a ER stress- and/or insulin-dependent but PI3K-independent manner (By similarity). Interacts with FGFR1, FGFR2, FGFR3 and FGFR4 (phosphorylated) (Probable). Interacts with IRS1 and phosphorylated IRS4 (PubMed:8628286). Interacts with PTK2/FAK1 (PubMed:8824286). Interacts with FAM83B; activates the PI3K/AKT signaling cascade (By similarity). Interacts with APPL1 and APPL2 (By similarity). Interacts with SRC (By similarity). Interacts with ALOX5; this interaction bridges ALOX5 with CD40 after CD40 ligation in B cells and leads to the production of reactive oxygen species (ROS) (By similarity). Interacts with TYK2 (By similarity). Interacts with nephrin NPHN1; the interaction is reduced by high glucose levels (By similarity). Interacts with CD28 (By similarity). Interacts with ICOS (By similarity).</text>
</comment>
<comment type="interaction">
    <interactant intactId="EBI-518443">
        <id>Q63787</id>
    </interactant>
    <interactant intactId="EBI-80070">
        <id>P21575</id>
        <label>Dnm1</label>
    </interactant>
    <organismsDiffer>false</organismsDiffer>
    <experiments>2</experiments>
</comment>
<comment type="interaction">
    <interactant intactId="EBI-518443">
        <id>Q63787</id>
    </interactant>
    <interactant intactId="EBI-6258192">
        <id>P62813</id>
        <label>Gabra1</label>
    </interactant>
    <organismsDiffer>false</organismsDiffer>
    <experiments>4</experiments>
</comment>
<comment type="interaction">
    <interactant intactId="EBI-518443">
        <id>Q63787</id>
    </interactant>
    <interactant intactId="EBI-520230">
        <id>P35570</id>
        <label>Irs1</label>
    </interactant>
    <organismsDiffer>false</organismsDiffer>
    <experiments>2</experiments>
</comment>
<comment type="interaction">
    <interactant intactId="EBI-518443">
        <id>Q63787</id>
    </interactant>
    <interactant intactId="EBI-518436">
        <id>Q91V33</id>
        <label>Khdrbs1</label>
    </interactant>
    <organismsDiffer>false</organismsDiffer>
    <experiments>2</experiments>
</comment>
<comment type="interaction">
    <interactant intactId="EBI-518443">
        <id>Q63787</id>
    </interactant>
    <interactant intactId="EBI-1392040">
        <id>A0MZ67</id>
        <label>Shtn1</label>
    </interactant>
    <organismsDiffer>false</organismsDiffer>
    <experiments>2</experiments>
</comment>
<comment type="interaction">
    <interactant intactId="EBI-518443">
        <id>Q63787</id>
    </interactant>
    <interactant intactId="EBI-2622029">
        <id>P18545</id>
        <label>PDE6G</label>
    </interactant>
    <organismsDiffer>true</organismsDiffer>
    <experiments>2</experiments>
</comment>
<comment type="alternative products">
    <event type="alternative splicing"/>
    <isoform>
        <id>Q63787-1</id>
        <name>p85-alpha</name>
        <sequence type="displayed"/>
    </isoform>
    <isoform>
        <id>Q63787-2</id>
        <name>p55-alpha</name>
        <sequence type="described" ref="VSP_004709 VSP_004710"/>
    </isoform>
    <isoform>
        <id>Q63787-3</id>
        <name>p50-alpha</name>
        <sequence type="described" ref="VSP_004711 VSP_004712"/>
    </isoform>
</comment>
<comment type="tissue specificity">
    <text>The P85-alpha isoform is widely expressed. Expression of the P55-alpha isoform is highest in brain and skeletal muscle. The P50-alpha isoform is abundant in liver with lower levels in brain and muscle.</text>
</comment>
<comment type="domain">
    <text evidence="1">The SH3 domain mediates the binding to CBLB.</text>
</comment>
<comment type="PTM">
    <text evidence="1">Polyubiquitinated in T-cells by CBLB; which does not promote proteasomal degradation but impairs association with CD28 and CD3Z upon T-cell activation.</text>
</comment>
<comment type="PTM">
    <text evidence="1">Phosphorylated. Tyrosine phosphorylated in response to signaling by FGFR1, FGFR2, FGFR3 and FGFR4. Phosphorylated by CSF1R. Phosphorylated on tyrosine residues by TEK/TIE2. Dephosphorylated by PTPRJ. Phosphorylated by PIK3CA at Ser-608; phosphorylation is stimulated by insulin and PDGF. The relevance of phosphorylation by PIK3CA is however unclear. Phosphorylated in response to KIT and KITLG/SCF. Phosphorylated by FGR and ERBB4 (By similarity).</text>
</comment>
<comment type="PTM">
    <text evidence="3">In adipose tissue, polyubiquitinated by the BCR(KBTBD2) E3 ubiquitin ligase complex; recognized by KBTBD2 through the SH2 domains, undergoes 'Lys-48'-linked polyubiquitination leading to its degradation.</text>
</comment>
<comment type="similarity">
    <text evidence="14">Belongs to the PI3K p85 subunit family.</text>
</comment>
<gene>
    <name type="primary">Pik3r1</name>
</gene>
<protein>
    <recommendedName>
        <fullName>Phosphatidylinositol 3-kinase regulatory subunit alpha</fullName>
        <shortName>PI3-kinase regulatory subunit alpha</shortName>
        <shortName>PI3K regulatory subunit alpha</shortName>
        <shortName>PtdIns-3-kinase regulatory subunit alpha</shortName>
    </recommendedName>
    <alternativeName>
        <fullName>Phosphatidylinositol 3-kinase 85 kDa regulatory subunit alpha</fullName>
        <shortName>PI3-kinase subunit p85-alpha</shortName>
        <shortName>PtdIns-3-kinase regulatory subunit p85-alpha</shortName>
    </alternativeName>
</protein>
<proteinExistence type="evidence at protein level"/>
<dbReference type="EMBL" id="D64045">
    <property type="protein sequence ID" value="BAA18932.1"/>
    <property type="molecule type" value="mRNA"/>
</dbReference>
<dbReference type="EMBL" id="D64048">
    <property type="protein sequence ID" value="BAA18933.1"/>
    <property type="molecule type" value="mRNA"/>
</dbReference>
<dbReference type="EMBL" id="U50412">
    <property type="protein sequence ID" value="AAC52846.1"/>
    <property type="molecule type" value="mRNA"/>
</dbReference>
<dbReference type="EMBL" id="D78486">
    <property type="protein sequence ID" value="BAA24426.1"/>
    <property type="molecule type" value="mRNA"/>
</dbReference>
<dbReference type="RefSeq" id="NP_037137.1">
    <property type="nucleotide sequence ID" value="NM_013005.1"/>
</dbReference>
<dbReference type="PDB" id="1FU5">
    <property type="method" value="NMR"/>
    <property type="chains" value="A=322-431"/>
</dbReference>
<dbReference type="PDB" id="1FU6">
    <property type="method" value="NMR"/>
    <property type="chains" value="A=322-431"/>
</dbReference>
<dbReference type="PDBsum" id="1FU5"/>
<dbReference type="PDBsum" id="1FU6"/>
<dbReference type="BMRB" id="Q63787"/>
<dbReference type="SMR" id="Q63787"/>
<dbReference type="BioGRID" id="247545">
    <property type="interactions" value="10"/>
</dbReference>
<dbReference type="CORUM" id="Q63787"/>
<dbReference type="DIP" id="DIP-33696N"/>
<dbReference type="FunCoup" id="Q63787">
    <property type="interactions" value="2684"/>
</dbReference>
<dbReference type="IntAct" id="Q63787">
    <property type="interactions" value="18"/>
</dbReference>
<dbReference type="MINT" id="Q63787"/>
<dbReference type="STRING" id="10116.ENSRNOP00000025687"/>
<dbReference type="GlyGen" id="Q63787">
    <property type="glycosylation" value="1 site, 1 O-linked glycan (1 site)"/>
</dbReference>
<dbReference type="iPTMnet" id="Q63787"/>
<dbReference type="PhosphoSitePlus" id="Q63787"/>
<dbReference type="jPOST" id="Q63787"/>
<dbReference type="PaxDb" id="10116-ENSRNOP00000025687"/>
<dbReference type="GeneID" id="25513"/>
<dbReference type="KEGG" id="rno:25513"/>
<dbReference type="UCSC" id="RGD:3329">
    <molecule id="Q63787-1"/>
    <property type="organism name" value="rat"/>
</dbReference>
<dbReference type="AGR" id="RGD:3329"/>
<dbReference type="CTD" id="5295"/>
<dbReference type="RGD" id="3329">
    <property type="gene designation" value="Pik3r1"/>
</dbReference>
<dbReference type="eggNOG" id="KOG4637">
    <property type="taxonomic scope" value="Eukaryota"/>
</dbReference>
<dbReference type="InParanoid" id="Q63787"/>
<dbReference type="OrthoDB" id="3175255at2759"/>
<dbReference type="PhylomeDB" id="Q63787"/>
<dbReference type="Reactome" id="R-RNO-109704">
    <property type="pathway name" value="PI3K Cascade"/>
</dbReference>
<dbReference type="Reactome" id="R-RNO-112399">
    <property type="pathway name" value="IRS-mediated signalling"/>
</dbReference>
<dbReference type="Reactome" id="R-RNO-114604">
    <property type="pathway name" value="GPVI-mediated activation cascade"/>
</dbReference>
<dbReference type="Reactome" id="R-RNO-1250342">
    <property type="pathway name" value="PI3K events in ERBB4 signaling"/>
</dbReference>
<dbReference type="Reactome" id="R-RNO-1257604">
    <property type="pathway name" value="PIP3 activates AKT signaling"/>
</dbReference>
<dbReference type="Reactome" id="R-RNO-1266695">
    <property type="pathway name" value="Interleukin-7 signaling"/>
</dbReference>
<dbReference type="Reactome" id="R-RNO-1433557">
    <property type="pathway name" value="Signaling by SCF-KIT"/>
</dbReference>
<dbReference type="Reactome" id="R-RNO-1660499">
    <property type="pathway name" value="Synthesis of PIPs at the plasma membrane"/>
</dbReference>
<dbReference type="Reactome" id="R-RNO-180292">
    <property type="pathway name" value="GAB1 signalosome"/>
</dbReference>
<dbReference type="Reactome" id="R-RNO-186763">
    <property type="pathway name" value="Downstream signal transduction"/>
</dbReference>
<dbReference type="Reactome" id="R-RNO-1963642">
    <property type="pathway name" value="PI3K events in ERBB2 signaling"/>
</dbReference>
<dbReference type="Reactome" id="R-RNO-198203">
    <property type="pathway name" value="PI3K/AKT activation"/>
</dbReference>
<dbReference type="Reactome" id="R-RNO-201556">
    <property type="pathway name" value="Signaling by ALK"/>
</dbReference>
<dbReference type="Reactome" id="R-RNO-202424">
    <property type="pathway name" value="Downstream TCR signaling"/>
</dbReference>
<dbReference type="Reactome" id="R-RNO-2029485">
    <property type="pathway name" value="Role of phospholipids in phagocytosis"/>
</dbReference>
<dbReference type="Reactome" id="R-RNO-210993">
    <property type="pathway name" value="Tie2 Signaling"/>
</dbReference>
<dbReference type="Reactome" id="R-RNO-2424491">
    <property type="pathway name" value="DAP12 signaling"/>
</dbReference>
<dbReference type="Reactome" id="R-RNO-2730905">
    <property type="pathway name" value="Role of LAT2/NTAL/LAB on calcium mobilization"/>
</dbReference>
<dbReference type="Reactome" id="R-RNO-389357">
    <property type="pathway name" value="CD28 dependent PI3K/Akt signaling"/>
</dbReference>
<dbReference type="Reactome" id="R-RNO-416476">
    <property type="pathway name" value="G alpha (q) signalling events"/>
</dbReference>
<dbReference type="Reactome" id="R-RNO-430116">
    <property type="pathway name" value="GP1b-IX-V activation signalling"/>
</dbReference>
<dbReference type="Reactome" id="R-RNO-4420097">
    <property type="pathway name" value="VEGFA-VEGFR2 Pathway"/>
</dbReference>
<dbReference type="Reactome" id="R-RNO-512988">
    <property type="pathway name" value="Interleukin-3, Interleukin-5 and GM-CSF signaling"/>
</dbReference>
<dbReference type="Reactome" id="R-RNO-5654689">
    <property type="pathway name" value="PI-3K cascade:FGFR1"/>
</dbReference>
<dbReference type="Reactome" id="R-RNO-5654695">
    <property type="pathway name" value="PI-3K cascade:FGFR2"/>
</dbReference>
<dbReference type="Reactome" id="R-RNO-5654710">
    <property type="pathway name" value="PI-3K cascade:FGFR3"/>
</dbReference>
<dbReference type="Reactome" id="R-RNO-5654720">
    <property type="pathway name" value="PI-3K cascade:FGFR4"/>
</dbReference>
<dbReference type="Reactome" id="R-RNO-5673001">
    <property type="pathway name" value="RAF/MAP kinase cascade"/>
</dbReference>
<dbReference type="Reactome" id="R-RNO-6811558">
    <property type="pathway name" value="PI5P, PP2A and IER3 Regulate PI3K/AKT Signaling"/>
</dbReference>
<dbReference type="Reactome" id="R-RNO-8851907">
    <property type="pathway name" value="MET activates PI3K/AKT signaling"/>
</dbReference>
<dbReference type="Reactome" id="R-RNO-8853659">
    <property type="pathway name" value="RET signaling"/>
</dbReference>
<dbReference type="Reactome" id="R-RNO-8980692">
    <property type="pathway name" value="RHOA GTPase cycle"/>
</dbReference>
<dbReference type="Reactome" id="R-RNO-9009391">
    <property type="pathway name" value="Extra-nuclear estrogen signaling"/>
</dbReference>
<dbReference type="Reactome" id="R-RNO-9013026">
    <property type="pathway name" value="RHOB GTPase cycle"/>
</dbReference>
<dbReference type="Reactome" id="R-RNO-9013148">
    <property type="pathway name" value="CDC42 GTPase cycle"/>
</dbReference>
<dbReference type="Reactome" id="R-RNO-9013149">
    <property type="pathway name" value="RAC1 GTPase cycle"/>
</dbReference>
<dbReference type="Reactome" id="R-RNO-9013404">
    <property type="pathway name" value="RAC2 GTPase cycle"/>
</dbReference>
<dbReference type="Reactome" id="R-RNO-9013405">
    <property type="pathway name" value="RHOD GTPase cycle"/>
</dbReference>
<dbReference type="Reactome" id="R-RNO-9013408">
    <property type="pathway name" value="RHOG GTPase cycle"/>
</dbReference>
<dbReference type="Reactome" id="R-RNO-9013409">
    <property type="pathway name" value="RHOJ GTPase cycle"/>
</dbReference>
<dbReference type="Reactome" id="R-RNO-9013420">
    <property type="pathway name" value="RHOU GTPase cycle"/>
</dbReference>
<dbReference type="Reactome" id="R-RNO-9013424">
    <property type="pathway name" value="RHOV GTPase cycle"/>
</dbReference>
<dbReference type="Reactome" id="R-RNO-9027276">
    <property type="pathway name" value="Erythropoietin activates Phosphoinositide-3-kinase (PI3K)"/>
</dbReference>
<dbReference type="Reactome" id="R-RNO-9035034">
    <property type="pathway name" value="RHOF GTPase cycle"/>
</dbReference>
<dbReference type="Reactome" id="R-RNO-912526">
    <property type="pathway name" value="Interleukin receptor SHC signaling"/>
</dbReference>
<dbReference type="Reactome" id="R-RNO-912631">
    <property type="pathway name" value="Regulation of signaling by CBL"/>
</dbReference>
<dbReference type="Reactome" id="R-RNO-9607240">
    <property type="pathway name" value="FLT3 Signaling"/>
</dbReference>
<dbReference type="Reactome" id="R-RNO-9696264">
    <property type="pathway name" value="RND3 GTPase cycle"/>
</dbReference>
<dbReference type="Reactome" id="R-RNO-9696270">
    <property type="pathway name" value="RND2 GTPase cycle"/>
</dbReference>
<dbReference type="Reactome" id="R-RNO-9696273">
    <property type="pathway name" value="RND1 GTPase cycle"/>
</dbReference>
<dbReference type="Reactome" id="R-RNO-983695">
    <property type="pathway name" value="Antigen activates B Cell Receptor (BCR) leading to generation of second messengers"/>
</dbReference>
<dbReference type="Reactome" id="R-RNO-9842663">
    <property type="pathway name" value="Signaling by LTK"/>
</dbReference>
<dbReference type="Reactome" id="R-RNO-9927354">
    <property type="pathway name" value="Co-stimulation by ICOS"/>
</dbReference>
<dbReference type="EvolutionaryTrace" id="Q63787"/>
<dbReference type="PRO" id="PR:Q63787"/>
<dbReference type="Proteomes" id="UP000002494">
    <property type="component" value="Unplaced"/>
</dbReference>
<dbReference type="GO" id="GO:0005911">
    <property type="term" value="C:cell-cell junction"/>
    <property type="evidence" value="ECO:0000266"/>
    <property type="project" value="RGD"/>
</dbReference>
<dbReference type="GO" id="GO:0005801">
    <property type="term" value="C:cis-Golgi network"/>
    <property type="evidence" value="ECO:0000266"/>
    <property type="project" value="RGD"/>
</dbReference>
<dbReference type="GO" id="GO:0005737">
    <property type="term" value="C:cytoplasm"/>
    <property type="evidence" value="ECO:0000266"/>
    <property type="project" value="RGD"/>
</dbReference>
<dbReference type="GO" id="GO:0005829">
    <property type="term" value="C:cytosol"/>
    <property type="evidence" value="ECO:0000266"/>
    <property type="project" value="RGD"/>
</dbReference>
<dbReference type="GO" id="GO:0016020">
    <property type="term" value="C:membrane"/>
    <property type="evidence" value="ECO:0000266"/>
    <property type="project" value="RGD"/>
</dbReference>
<dbReference type="GO" id="GO:0005634">
    <property type="term" value="C:nucleus"/>
    <property type="evidence" value="ECO:0000266"/>
    <property type="project" value="RGD"/>
</dbReference>
<dbReference type="GO" id="GO:1990578">
    <property type="term" value="C:perinuclear endoplasmic reticulum membrane"/>
    <property type="evidence" value="ECO:0000266"/>
    <property type="project" value="RGD"/>
</dbReference>
<dbReference type="GO" id="GO:0048471">
    <property type="term" value="C:perinuclear region of cytoplasm"/>
    <property type="evidence" value="ECO:0000266"/>
    <property type="project" value="RGD"/>
</dbReference>
<dbReference type="GO" id="GO:0005942">
    <property type="term" value="C:phosphatidylinositol 3-kinase complex"/>
    <property type="evidence" value="ECO:0000314"/>
    <property type="project" value="RGD"/>
</dbReference>
<dbReference type="GO" id="GO:0005943">
    <property type="term" value="C:phosphatidylinositol 3-kinase complex, class IA"/>
    <property type="evidence" value="ECO:0000250"/>
    <property type="project" value="UniProtKB"/>
</dbReference>
<dbReference type="GO" id="GO:0032991">
    <property type="term" value="C:protein-containing complex"/>
    <property type="evidence" value="ECO:0000314"/>
    <property type="project" value="RGD"/>
</dbReference>
<dbReference type="GO" id="GO:0016303">
    <property type="term" value="F:1-phosphatidylinositol-3-kinase activity"/>
    <property type="evidence" value="ECO:0000304"/>
    <property type="project" value="RGD"/>
</dbReference>
<dbReference type="GO" id="GO:0046935">
    <property type="term" value="F:1-phosphatidylinositol-3-kinase regulator activity"/>
    <property type="evidence" value="ECO:0000314"/>
    <property type="project" value="RGD"/>
</dbReference>
<dbReference type="GO" id="GO:0051117">
    <property type="term" value="F:ATPase binding"/>
    <property type="evidence" value="ECO:0000353"/>
    <property type="project" value="RGD"/>
</dbReference>
<dbReference type="GO" id="GO:0005516">
    <property type="term" value="F:calmodulin binding"/>
    <property type="evidence" value="ECO:0000353"/>
    <property type="project" value="RGD"/>
</dbReference>
<dbReference type="GO" id="GO:0043125">
    <property type="term" value="F:ErbB-3 class receptor binding"/>
    <property type="evidence" value="ECO:0000250"/>
    <property type="project" value="UniProtKB"/>
</dbReference>
<dbReference type="GO" id="GO:0043559">
    <property type="term" value="F:insulin binding"/>
    <property type="evidence" value="ECO:0000266"/>
    <property type="project" value="RGD"/>
</dbReference>
<dbReference type="GO" id="GO:0005158">
    <property type="term" value="F:insulin receptor binding"/>
    <property type="evidence" value="ECO:0000250"/>
    <property type="project" value="UniProtKB"/>
</dbReference>
<dbReference type="GO" id="GO:0043560">
    <property type="term" value="F:insulin receptor substrate binding"/>
    <property type="evidence" value="ECO:0000353"/>
    <property type="project" value="RGD"/>
</dbReference>
<dbReference type="GO" id="GO:0005159">
    <property type="term" value="F:insulin-like growth factor receptor binding"/>
    <property type="evidence" value="ECO:0000250"/>
    <property type="project" value="UniProtKB"/>
</dbReference>
<dbReference type="GO" id="GO:0019209">
    <property type="term" value="F:kinase activator activity"/>
    <property type="evidence" value="ECO:0000266"/>
    <property type="project" value="RGD"/>
</dbReference>
<dbReference type="GO" id="GO:0005168">
    <property type="term" value="F:neurotrophin TRKA receptor binding"/>
    <property type="evidence" value="ECO:0000266"/>
    <property type="project" value="RGD"/>
</dbReference>
<dbReference type="GO" id="GO:0030331">
    <property type="term" value="F:nuclear estrogen receptor binding"/>
    <property type="evidence" value="ECO:0000353"/>
    <property type="project" value="RGD"/>
</dbReference>
<dbReference type="GO" id="GO:0035014">
    <property type="term" value="F:phosphatidylinositol 3-kinase regulator activity"/>
    <property type="evidence" value="ECO:0000250"/>
    <property type="project" value="UniProtKB"/>
</dbReference>
<dbReference type="GO" id="GO:0036312">
    <property type="term" value="F:phosphatidylinositol 3-kinase regulatory subunit binding"/>
    <property type="evidence" value="ECO:0000266"/>
    <property type="project" value="RGD"/>
</dbReference>
<dbReference type="GO" id="GO:0051219">
    <property type="term" value="F:phosphoprotein binding"/>
    <property type="evidence" value="ECO:0000353"/>
    <property type="project" value="RGD"/>
</dbReference>
<dbReference type="GO" id="GO:0001784">
    <property type="term" value="F:phosphotyrosine residue binding"/>
    <property type="evidence" value="ECO:0000266"/>
    <property type="project" value="RGD"/>
</dbReference>
<dbReference type="GO" id="GO:0005161">
    <property type="term" value="F:platelet-derived growth factor receptor binding"/>
    <property type="evidence" value="ECO:0000353"/>
    <property type="project" value="RGD"/>
</dbReference>
<dbReference type="GO" id="GO:0019904">
    <property type="term" value="F:protein domain specific binding"/>
    <property type="evidence" value="ECO:0000353"/>
    <property type="project" value="RGD"/>
</dbReference>
<dbReference type="GO" id="GO:0046982">
    <property type="term" value="F:protein heterodimerization activity"/>
    <property type="evidence" value="ECO:0000266"/>
    <property type="project" value="RGD"/>
</dbReference>
<dbReference type="GO" id="GO:0019901">
    <property type="term" value="F:protein kinase binding"/>
    <property type="evidence" value="ECO:0000353"/>
    <property type="project" value="RGD"/>
</dbReference>
<dbReference type="GO" id="GO:0019903">
    <property type="term" value="F:protein phosphatase binding"/>
    <property type="evidence" value="ECO:0000266"/>
    <property type="project" value="RGD"/>
</dbReference>
<dbReference type="GO" id="GO:0030971">
    <property type="term" value="F:receptor tyrosine kinase binding"/>
    <property type="evidence" value="ECO:0000353"/>
    <property type="project" value="RGD"/>
</dbReference>
<dbReference type="GO" id="GO:0005102">
    <property type="term" value="F:signaling receptor binding"/>
    <property type="evidence" value="ECO:0000353"/>
    <property type="project" value="RGD"/>
</dbReference>
<dbReference type="GO" id="GO:0031625">
    <property type="term" value="F:ubiquitin protein ligase binding"/>
    <property type="evidence" value="ECO:0000353"/>
    <property type="project" value="RGD"/>
</dbReference>
<dbReference type="GO" id="GO:0030183">
    <property type="term" value="P:B cell differentiation"/>
    <property type="evidence" value="ECO:0000266"/>
    <property type="project" value="RGD"/>
</dbReference>
<dbReference type="GO" id="GO:0071398">
    <property type="term" value="P:cellular response to fatty acid"/>
    <property type="evidence" value="ECO:0000270"/>
    <property type="project" value="RGD"/>
</dbReference>
<dbReference type="GO" id="GO:0032869">
    <property type="term" value="P:cellular response to insulin stimulus"/>
    <property type="evidence" value="ECO:0000270"/>
    <property type="project" value="RGD"/>
</dbReference>
<dbReference type="GO" id="GO:0034644">
    <property type="term" value="P:cellular response to UV"/>
    <property type="evidence" value="ECO:0000266"/>
    <property type="project" value="RGD"/>
</dbReference>
<dbReference type="GO" id="GO:0019221">
    <property type="term" value="P:cytokine-mediated signaling pathway"/>
    <property type="evidence" value="ECO:0000266"/>
    <property type="project" value="RGD"/>
</dbReference>
<dbReference type="GO" id="GO:0008625">
    <property type="term" value="P:extrinsic apoptotic signaling pathway via death domain receptors"/>
    <property type="evidence" value="ECO:0000266"/>
    <property type="project" value="RGD"/>
</dbReference>
<dbReference type="GO" id="GO:0006006">
    <property type="term" value="P:glucose metabolic process"/>
    <property type="evidence" value="ECO:0000315"/>
    <property type="project" value="RGD"/>
</dbReference>
<dbReference type="GO" id="GO:0060396">
    <property type="term" value="P:growth hormone receptor signaling pathway"/>
    <property type="evidence" value="ECO:0000266"/>
    <property type="project" value="RGD"/>
</dbReference>
<dbReference type="GO" id="GO:0008286">
    <property type="term" value="P:insulin receptor signaling pathway"/>
    <property type="evidence" value="ECO:0000315"/>
    <property type="project" value="RGD"/>
</dbReference>
<dbReference type="GO" id="GO:0048009">
    <property type="term" value="P:insulin-like growth factor receptor signaling pathway"/>
    <property type="evidence" value="ECO:0000315"/>
    <property type="project" value="RGD"/>
</dbReference>
<dbReference type="GO" id="GO:0035655">
    <property type="term" value="P:interleukin-18-mediated signaling pathway"/>
    <property type="evidence" value="ECO:0000266"/>
    <property type="project" value="RGD"/>
</dbReference>
<dbReference type="GO" id="GO:0001678">
    <property type="term" value="P:intracellular glucose homeostasis"/>
    <property type="evidence" value="ECO:0000250"/>
    <property type="project" value="UniProtKB"/>
</dbReference>
<dbReference type="GO" id="GO:0008630">
    <property type="term" value="P:intrinsic apoptotic signaling pathway in response to DNA damage"/>
    <property type="evidence" value="ECO:0000266"/>
    <property type="project" value="RGD"/>
</dbReference>
<dbReference type="GO" id="GO:0097529">
    <property type="term" value="P:myeloid leukocyte migration"/>
    <property type="evidence" value="ECO:0000266"/>
    <property type="project" value="RGD"/>
</dbReference>
<dbReference type="GO" id="GO:0042267">
    <property type="term" value="P:natural killer cell mediated cytotoxicity"/>
    <property type="evidence" value="ECO:0000266"/>
    <property type="project" value="RGD"/>
</dbReference>
<dbReference type="GO" id="GO:0043066">
    <property type="term" value="P:negative regulation of apoptotic process"/>
    <property type="evidence" value="ECO:0000250"/>
    <property type="project" value="UniProtKB"/>
</dbReference>
<dbReference type="GO" id="GO:0045776">
    <property type="term" value="P:negative regulation of blood pressure"/>
    <property type="evidence" value="ECO:0000315"/>
    <property type="project" value="RGD"/>
</dbReference>
<dbReference type="GO" id="GO:0007162">
    <property type="term" value="P:negative regulation of cell adhesion"/>
    <property type="evidence" value="ECO:0000266"/>
    <property type="project" value="RGD"/>
</dbReference>
<dbReference type="GO" id="GO:0022408">
    <property type="term" value="P:negative regulation of cell-cell adhesion"/>
    <property type="evidence" value="ECO:0000315"/>
    <property type="project" value="RGD"/>
</dbReference>
<dbReference type="GO" id="GO:0001953">
    <property type="term" value="P:negative regulation of cell-matrix adhesion"/>
    <property type="evidence" value="ECO:0000266"/>
    <property type="project" value="RGD"/>
</dbReference>
<dbReference type="GO" id="GO:0010459">
    <property type="term" value="P:negative regulation of heart rate"/>
    <property type="evidence" value="ECO:0000315"/>
    <property type="project" value="RGD"/>
</dbReference>
<dbReference type="GO" id="GO:0010656">
    <property type="term" value="P:negative regulation of muscle cell apoptotic process"/>
    <property type="evidence" value="ECO:0000315"/>
    <property type="project" value="RGD"/>
</dbReference>
<dbReference type="GO" id="GO:0045671">
    <property type="term" value="P:negative regulation of osteoclast differentiation"/>
    <property type="evidence" value="ECO:0000266"/>
    <property type="project" value="RGD"/>
</dbReference>
<dbReference type="GO" id="GO:0045861">
    <property type="term" value="P:negative regulation of proteolysis"/>
    <property type="evidence" value="ECO:0000315"/>
    <property type="project" value="RGD"/>
</dbReference>
<dbReference type="GO" id="GO:0048662">
    <property type="term" value="P:negative regulation of smooth muscle cell proliferation"/>
    <property type="evidence" value="ECO:0000315"/>
    <property type="project" value="RGD"/>
</dbReference>
<dbReference type="GO" id="GO:0051497">
    <property type="term" value="P:negative regulation of stress fiber assembly"/>
    <property type="evidence" value="ECO:0000266"/>
    <property type="project" value="RGD"/>
</dbReference>
<dbReference type="GO" id="GO:0030316">
    <property type="term" value="P:osteoclast differentiation"/>
    <property type="evidence" value="ECO:0000266"/>
    <property type="project" value="RGD"/>
</dbReference>
<dbReference type="GO" id="GO:0043491">
    <property type="term" value="P:phosphatidylinositol 3-kinase/protein kinase B signal transduction"/>
    <property type="evidence" value="ECO:0000266"/>
    <property type="project" value="RGD"/>
</dbReference>
<dbReference type="GO" id="GO:0046488">
    <property type="term" value="P:phosphatidylinositol metabolic process"/>
    <property type="evidence" value="ECO:0000314"/>
    <property type="project" value="RGD"/>
</dbReference>
<dbReference type="GO" id="GO:0046854">
    <property type="term" value="P:phosphatidylinositol phosphate biosynthetic process"/>
    <property type="evidence" value="ECO:0000250"/>
    <property type="project" value="UniProtKB"/>
</dbReference>
<dbReference type="GO" id="GO:0030335">
    <property type="term" value="P:positive regulation of cell migration"/>
    <property type="evidence" value="ECO:0000315"/>
    <property type="project" value="RGD"/>
</dbReference>
<dbReference type="GO" id="GO:1900103">
    <property type="term" value="P:positive regulation of endoplasmic reticulum unfolded protein response"/>
    <property type="evidence" value="ECO:0000250"/>
    <property type="project" value="UniProtKB"/>
</dbReference>
<dbReference type="GO" id="GO:0051491">
    <property type="term" value="P:positive regulation of filopodium assembly"/>
    <property type="evidence" value="ECO:0000266"/>
    <property type="project" value="RGD"/>
</dbReference>
<dbReference type="GO" id="GO:0120183">
    <property type="term" value="P:positive regulation of focal adhesion disassembly"/>
    <property type="evidence" value="ECO:0000266"/>
    <property type="project" value="RGD"/>
</dbReference>
<dbReference type="GO" id="GO:0010628">
    <property type="term" value="P:positive regulation of gene expression"/>
    <property type="evidence" value="ECO:0000315"/>
    <property type="project" value="RGD"/>
</dbReference>
<dbReference type="GO" id="GO:0010592">
    <property type="term" value="P:positive regulation of lamellipodium assembly"/>
    <property type="evidence" value="ECO:0000266"/>
    <property type="project" value="RGD"/>
</dbReference>
<dbReference type="GO" id="GO:0002687">
    <property type="term" value="P:positive regulation of leukocyte migration"/>
    <property type="evidence" value="ECO:0000266"/>
    <property type="project" value="RGD"/>
</dbReference>
<dbReference type="GO" id="GO:0045663">
    <property type="term" value="P:positive regulation of myoblast differentiation"/>
    <property type="evidence" value="ECO:0000315"/>
    <property type="project" value="RGD"/>
</dbReference>
<dbReference type="GO" id="GO:0042307">
    <property type="term" value="P:positive regulation of protein import into nucleus"/>
    <property type="evidence" value="ECO:0000250"/>
    <property type="project" value="UniProtKB"/>
</dbReference>
<dbReference type="GO" id="GO:0033120">
    <property type="term" value="P:positive regulation of RNA splicing"/>
    <property type="evidence" value="ECO:0000250"/>
    <property type="project" value="UniProtKB"/>
</dbReference>
<dbReference type="GO" id="GO:0048661">
    <property type="term" value="P:positive regulation of smooth muscle cell proliferation"/>
    <property type="evidence" value="ECO:0000266"/>
    <property type="project" value="RGD"/>
</dbReference>
<dbReference type="GO" id="GO:0051965">
    <property type="term" value="P:positive regulation of synapse assembly"/>
    <property type="evidence" value="ECO:0000314"/>
    <property type="project" value="CACAO"/>
</dbReference>
<dbReference type="GO" id="GO:0045944">
    <property type="term" value="P:positive regulation of transcription by RNA polymerase II"/>
    <property type="evidence" value="ECO:0000250"/>
    <property type="project" value="UniProtKB"/>
</dbReference>
<dbReference type="GO" id="GO:0032760">
    <property type="term" value="P:positive regulation of tumor necrosis factor production"/>
    <property type="evidence" value="ECO:0000266"/>
    <property type="project" value="RGD"/>
</dbReference>
<dbReference type="GO" id="GO:0006606">
    <property type="term" value="P:protein import into nucleus"/>
    <property type="evidence" value="ECO:0000266"/>
    <property type="project" value="RGD"/>
</dbReference>
<dbReference type="GO" id="GO:0050821">
    <property type="term" value="P:protein stabilization"/>
    <property type="evidence" value="ECO:0000250"/>
    <property type="project" value="UniProtKB"/>
</dbReference>
<dbReference type="GO" id="GO:1903076">
    <property type="term" value="P:regulation of protein localization to plasma membrane"/>
    <property type="evidence" value="ECO:0000266"/>
    <property type="project" value="RGD"/>
</dbReference>
<dbReference type="GO" id="GO:0051492">
    <property type="term" value="P:regulation of stress fiber assembly"/>
    <property type="evidence" value="ECO:0000266"/>
    <property type="project" value="RGD"/>
</dbReference>
<dbReference type="GO" id="GO:0034143">
    <property type="term" value="P:regulation of toll-like receptor 4 signaling pathway"/>
    <property type="evidence" value="ECO:0000266"/>
    <property type="project" value="RGD"/>
</dbReference>
<dbReference type="GO" id="GO:0043200">
    <property type="term" value="P:response to amino acid"/>
    <property type="evidence" value="ECO:0000270"/>
    <property type="project" value="RGD"/>
</dbReference>
<dbReference type="GO" id="GO:0051591">
    <property type="term" value="P:response to cAMP"/>
    <property type="evidence" value="ECO:0000314"/>
    <property type="project" value="RGD"/>
</dbReference>
<dbReference type="GO" id="GO:0071548">
    <property type="term" value="P:response to dexamethasone"/>
    <property type="evidence" value="ECO:0000270"/>
    <property type="project" value="RGD"/>
</dbReference>
<dbReference type="GO" id="GO:0034976">
    <property type="term" value="P:response to endoplasmic reticulum stress"/>
    <property type="evidence" value="ECO:0000250"/>
    <property type="project" value="UniProtKB"/>
</dbReference>
<dbReference type="GO" id="GO:0032355">
    <property type="term" value="P:response to estradiol"/>
    <property type="evidence" value="ECO:0000270"/>
    <property type="project" value="RGD"/>
</dbReference>
<dbReference type="GO" id="GO:0045471">
    <property type="term" value="P:response to ethanol"/>
    <property type="evidence" value="ECO:0000270"/>
    <property type="project" value="RGD"/>
</dbReference>
<dbReference type="GO" id="GO:0070542">
    <property type="term" value="P:response to fatty acid"/>
    <property type="evidence" value="ECO:0000270"/>
    <property type="project" value="RGD"/>
</dbReference>
<dbReference type="GO" id="GO:0009750">
    <property type="term" value="P:response to fructose"/>
    <property type="evidence" value="ECO:0000270"/>
    <property type="project" value="RGD"/>
</dbReference>
<dbReference type="GO" id="GO:0051384">
    <property type="term" value="P:response to glucocorticoid"/>
    <property type="evidence" value="ECO:0000314"/>
    <property type="project" value="RGD"/>
</dbReference>
<dbReference type="GO" id="GO:0070848">
    <property type="term" value="P:response to growth factor"/>
    <property type="evidence" value="ECO:0000270"/>
    <property type="project" value="RGD"/>
</dbReference>
<dbReference type="GO" id="GO:0032868">
    <property type="term" value="P:response to insulin"/>
    <property type="evidence" value="ECO:0000314"/>
    <property type="project" value="RGD"/>
</dbReference>
<dbReference type="GO" id="GO:0010040">
    <property type="term" value="P:response to iron(II) ion"/>
    <property type="evidence" value="ECO:0000270"/>
    <property type="project" value="RGD"/>
</dbReference>
<dbReference type="GO" id="GO:0007584">
    <property type="term" value="P:response to nutrient"/>
    <property type="evidence" value="ECO:0000270"/>
    <property type="project" value="RGD"/>
</dbReference>
<dbReference type="GO" id="GO:0032570">
    <property type="term" value="P:response to progesterone"/>
    <property type="evidence" value="ECO:0000270"/>
    <property type="project" value="RGD"/>
</dbReference>
<dbReference type="GO" id="GO:0033574">
    <property type="term" value="P:response to testosterone"/>
    <property type="evidence" value="ECO:0000270"/>
    <property type="project" value="RGD"/>
</dbReference>
<dbReference type="GO" id="GO:0009410">
    <property type="term" value="P:response to xenobiotic stimulus"/>
    <property type="evidence" value="ECO:0000270"/>
    <property type="project" value="RGD"/>
</dbReference>
<dbReference type="GO" id="GO:0001878">
    <property type="term" value="P:response to yeast"/>
    <property type="evidence" value="ECO:0000270"/>
    <property type="project" value="RGD"/>
</dbReference>
<dbReference type="GO" id="GO:0061470">
    <property type="term" value="P:T follicular helper cell differentiation"/>
    <property type="evidence" value="ECO:0000266"/>
    <property type="project" value="RGD"/>
</dbReference>
<dbReference type="GO" id="GO:0006366">
    <property type="term" value="P:transcription by RNA polymerase II"/>
    <property type="evidence" value="ECO:0000266"/>
    <property type="project" value="RGD"/>
</dbReference>
<dbReference type="CDD" id="cd12924">
    <property type="entry name" value="iSH2_PIK3R1"/>
    <property type="match status" value="1"/>
</dbReference>
<dbReference type="CDD" id="cd04388">
    <property type="entry name" value="RhoGAP_p85"/>
    <property type="match status" value="1"/>
</dbReference>
<dbReference type="CDD" id="cd09930">
    <property type="entry name" value="SH2_cSH2_p85_like"/>
    <property type="match status" value="1"/>
</dbReference>
<dbReference type="CDD" id="cd09942">
    <property type="entry name" value="SH2_nSH2_p85_like"/>
    <property type="match status" value="1"/>
</dbReference>
<dbReference type="CDD" id="cd11910">
    <property type="entry name" value="SH3_PI3K_p85alpha"/>
    <property type="match status" value="1"/>
</dbReference>
<dbReference type="FunFam" id="1.10.555.10:FF:000035">
    <property type="entry name" value="Phosphatidylinositol 3-kinase regulatory subunit alpha"/>
    <property type="match status" value="1"/>
</dbReference>
<dbReference type="FunFam" id="3.30.505.10:FF:000006">
    <property type="entry name" value="Phosphatidylinositol 3-kinase regulatory subunit alpha"/>
    <property type="match status" value="1"/>
</dbReference>
<dbReference type="FunFam" id="3.30.505.10:FF:000014">
    <property type="entry name" value="Phosphatidylinositol 3-kinase regulatory subunit alpha"/>
    <property type="match status" value="1"/>
</dbReference>
<dbReference type="FunFam" id="2.30.30.40:FF:000075">
    <property type="entry name" value="phosphatidylinositol 3-kinase regulatory subunit alpha"/>
    <property type="match status" value="1"/>
</dbReference>
<dbReference type="FunFam" id="1.10.287.1490:FF:000001">
    <property type="entry name" value="Putative phosphatidylinositol 3-kinase regulatory subunit alpha"/>
    <property type="match status" value="1"/>
</dbReference>
<dbReference type="Gene3D" id="1.10.287.1490">
    <property type="match status" value="1"/>
</dbReference>
<dbReference type="Gene3D" id="1.10.555.10">
    <property type="entry name" value="Rho GTPase activation protein"/>
    <property type="match status" value="1"/>
</dbReference>
<dbReference type="Gene3D" id="3.30.505.10">
    <property type="entry name" value="SH2 domain"/>
    <property type="match status" value="2"/>
</dbReference>
<dbReference type="Gene3D" id="2.30.30.40">
    <property type="entry name" value="SH3 Domains"/>
    <property type="match status" value="1"/>
</dbReference>
<dbReference type="IDEAL" id="IID50255"/>
<dbReference type="InterPro" id="IPR044124">
    <property type="entry name" value="ISH2_PIK3R1"/>
</dbReference>
<dbReference type="InterPro" id="IPR032498">
    <property type="entry name" value="PI3K_P85_iSH2"/>
</dbReference>
<dbReference type="InterPro" id="IPR035591">
    <property type="entry name" value="PI3K_p85alpha_SH3"/>
</dbReference>
<dbReference type="InterPro" id="IPR035020">
    <property type="entry name" value="PI3kinase_P85_cSH2"/>
</dbReference>
<dbReference type="InterPro" id="IPR035022">
    <property type="entry name" value="PI3kinase_P85_nSH2"/>
</dbReference>
<dbReference type="InterPro" id="IPR008936">
    <property type="entry name" value="Rho_GTPase_activation_prot"/>
</dbReference>
<dbReference type="InterPro" id="IPR000198">
    <property type="entry name" value="RhoGAP_dom"/>
</dbReference>
<dbReference type="InterPro" id="IPR000980">
    <property type="entry name" value="SH2"/>
</dbReference>
<dbReference type="InterPro" id="IPR036860">
    <property type="entry name" value="SH2_dom_sf"/>
</dbReference>
<dbReference type="InterPro" id="IPR036028">
    <property type="entry name" value="SH3-like_dom_sf"/>
</dbReference>
<dbReference type="InterPro" id="IPR001452">
    <property type="entry name" value="SH3_domain"/>
</dbReference>
<dbReference type="PANTHER" id="PTHR10155">
    <property type="entry name" value="PHOSPHATIDYLINOSITOL 3-KINASE REGULATORY SUBUNIT"/>
    <property type="match status" value="1"/>
</dbReference>
<dbReference type="PANTHER" id="PTHR10155:SF1">
    <property type="entry name" value="PHOSPHATIDYLINOSITOL 3-KINASE REGULATORY SUBUNIT BETA"/>
    <property type="match status" value="1"/>
</dbReference>
<dbReference type="Pfam" id="PF16454">
    <property type="entry name" value="PI3K_P85_iSH2"/>
    <property type="match status" value="1"/>
</dbReference>
<dbReference type="Pfam" id="PF00620">
    <property type="entry name" value="RhoGAP"/>
    <property type="match status" value="1"/>
</dbReference>
<dbReference type="Pfam" id="PF00017">
    <property type="entry name" value="SH2"/>
    <property type="match status" value="2"/>
</dbReference>
<dbReference type="PRINTS" id="PR00678">
    <property type="entry name" value="PI3KINASEP85"/>
</dbReference>
<dbReference type="PRINTS" id="PR00401">
    <property type="entry name" value="SH2DOMAIN"/>
</dbReference>
<dbReference type="SMART" id="SM00324">
    <property type="entry name" value="RhoGAP"/>
    <property type="match status" value="1"/>
</dbReference>
<dbReference type="SMART" id="SM00252">
    <property type="entry name" value="SH2"/>
    <property type="match status" value="2"/>
</dbReference>
<dbReference type="SMART" id="SM00326">
    <property type="entry name" value="SH3"/>
    <property type="match status" value="1"/>
</dbReference>
<dbReference type="SUPFAM" id="SSF48350">
    <property type="entry name" value="GTPase activation domain, GAP"/>
    <property type="match status" value="1"/>
</dbReference>
<dbReference type="SUPFAM" id="SSF55550">
    <property type="entry name" value="SH2 domain"/>
    <property type="match status" value="2"/>
</dbReference>
<dbReference type="SUPFAM" id="SSF50044">
    <property type="entry name" value="SH3-domain"/>
    <property type="match status" value="1"/>
</dbReference>
<dbReference type="PROSITE" id="PS50238">
    <property type="entry name" value="RHOGAP"/>
    <property type="match status" value="1"/>
</dbReference>
<dbReference type="PROSITE" id="PS50001">
    <property type="entry name" value="SH2"/>
    <property type="match status" value="2"/>
</dbReference>
<dbReference type="PROSITE" id="PS50002">
    <property type="entry name" value="SH3"/>
    <property type="match status" value="1"/>
</dbReference>
<evidence type="ECO:0000250" key="1"/>
<evidence type="ECO:0000250" key="2">
    <source>
        <dbReference type="UniProtKB" id="P23727"/>
    </source>
</evidence>
<evidence type="ECO:0000250" key="3">
    <source>
        <dbReference type="UniProtKB" id="P26450"/>
    </source>
</evidence>
<evidence type="ECO:0000250" key="4">
    <source>
        <dbReference type="UniProtKB" id="P27986"/>
    </source>
</evidence>
<evidence type="ECO:0000255" key="5">
    <source>
        <dbReference type="PROSITE-ProRule" id="PRU00172"/>
    </source>
</evidence>
<evidence type="ECO:0000255" key="6">
    <source>
        <dbReference type="PROSITE-ProRule" id="PRU00191"/>
    </source>
</evidence>
<evidence type="ECO:0000255" key="7">
    <source>
        <dbReference type="PROSITE-ProRule" id="PRU00192"/>
    </source>
</evidence>
<evidence type="ECO:0000256" key="8">
    <source>
        <dbReference type="SAM" id="MobiDB-lite"/>
    </source>
</evidence>
<evidence type="ECO:0000269" key="9">
    <source>
    </source>
</evidence>
<evidence type="ECO:0000269" key="10">
    <source>
    </source>
</evidence>
<evidence type="ECO:0000303" key="11">
    <source>
    </source>
</evidence>
<evidence type="ECO:0000303" key="12">
    <source>
    </source>
</evidence>
<evidence type="ECO:0000303" key="13">
    <source>
    </source>
</evidence>
<evidence type="ECO:0000305" key="14"/>
<evidence type="ECO:0007829" key="15">
    <source>
        <dbReference type="PDB" id="1FU5"/>
    </source>
</evidence>
<evidence type="ECO:0007829" key="16">
    <source>
        <dbReference type="PDB" id="1FU6"/>
    </source>
</evidence>
<reference key="1">
    <citation type="journal article" date="1996" name="J. Biol. Chem.">
        <title>A novel 55-kDa regulatory subunit for phosphatidylinositol 3-kinase structurally similar to p55PIK is generated by alternative splicing of the p85alpha gene.</title>
        <authorList>
            <person name="Inukai K."/>
            <person name="Anai M."/>
            <person name="van Breda E."/>
            <person name="Hosaka T."/>
            <person name="Katagiri H."/>
            <person name="Funaki M."/>
            <person name="Fukushima Y."/>
            <person name="Ogihara T."/>
            <person name="Yazaki Y."/>
            <person name="Kikuchi M."/>
            <person name="Oka Y."/>
            <person name="Asano T."/>
        </authorList>
    </citation>
    <scope>NUCLEOTIDE SEQUENCE [MRNA] (ISOFORMS P85-ALPHA AND P55-ALPHA)</scope>
    <source>
        <strain>Wistar</strain>
        <tissue>Brain</tissue>
    </source>
</reference>
<reference key="2">
    <citation type="journal article" date="1997" name="J. Biol. Chem.">
        <title>p85alpha gene generates three isoforms of regulatory subunit for phosphatidylinositol 3-kinase (PI 3-Kinase), p50alpha, p55alpha, and p85alpha, with different PI 3-kinase activity elevating responses to insulin.</title>
        <authorList>
            <person name="Inukai K."/>
            <person name="Funaki M."/>
            <person name="Ogihara T."/>
            <person name="Katagiri H."/>
            <person name="Kanda A."/>
            <person name="Anai M."/>
            <person name="Fukushima Y."/>
            <person name="Hosaka T."/>
            <person name="Suzuki M."/>
            <person name="Shin B."/>
            <person name="Takata K."/>
            <person name="Yazaki Y."/>
            <person name="Kikuchi M."/>
            <person name="Oka Y."/>
            <person name="Asano T."/>
        </authorList>
    </citation>
    <scope>NUCLEOTIDE SEQUENCE [MRNA] (ISOFORM P50-ALPHA)</scope>
    <source>
        <tissue>Liver</tissue>
    </source>
</reference>
<reference key="3">
    <citation type="journal article" date="1996" name="Genomics">
        <title>Structural organization and alternative splicing of the murine phosphoinositide 3-kinase p85 alpha gene.</title>
        <authorList>
            <person name="Fruman D.A."/>
            <person name="Cantley L.C."/>
            <person name="Carpenter C.L."/>
        </authorList>
    </citation>
    <scope>NUCLEOTIDE SEQUENCE [MRNA] (ISOFORM P50-ALPHA)</scope>
    <source>
        <tissue>Liver</tissue>
    </source>
</reference>
<reference key="4">
    <citation type="journal article" date="1994" name="J. Biol. Chem.">
        <title>Signal transduction by fibroblast growth factor receptor-4 (FGFR-4). Comparison with FGFR-1.</title>
        <authorList>
            <person name="Vainikka S."/>
            <person name="Joukov V."/>
            <person name="Wennstrom S."/>
            <person name="Bergman M."/>
            <person name="Pelicci P.G."/>
            <person name="Alitalo K."/>
        </authorList>
    </citation>
    <scope>ACTIVATION BY FGFR4</scope>
</reference>
<reference key="5">
    <citation type="journal article" date="1996" name="J. Biol. Chem.">
        <title>Phosphorylation of tyrosine 397 in focal adhesion kinase is required for binding phosphatidylinositol 3-kinase.</title>
        <authorList>
            <person name="Chen H.C."/>
            <person name="Appeddu P.A."/>
            <person name="Isoda H."/>
            <person name="Guan J.L."/>
        </authorList>
    </citation>
    <scope>INTERACTION WITH PTK2/FAK1</scope>
</reference>
<reference key="6">
    <citation type="journal article" date="1996" name="Mol. Cell. Biol.">
        <title>Insulin receptor substrate 1 binds two novel splice variants of the regulatory subunit of phosphatidylinositol 3-kinase in muscle and brain.</title>
        <authorList>
            <person name="Antonetti D.A."/>
            <person name="Algenstaedt P."/>
            <person name="Kahn C.R."/>
        </authorList>
    </citation>
    <scope>INTERACTION WITH IRS1</scope>
</reference>
<reference key="7">
    <citation type="journal article" date="2001" name="Proc. Natl. Acad. Sci. U.S.A.">
        <title>Stimulation of phosphatidylinositol 3-kinase by fibroblast growth factor receptors is mediated by coordinated recruitment of multiple docking proteins.</title>
        <authorList>
            <person name="Ong S.H."/>
            <person name="Hadari Y.R."/>
            <person name="Gotoh N."/>
            <person name="Guy G.R."/>
            <person name="Schlessinger J."/>
            <person name="Lax I."/>
        </authorList>
    </citation>
    <scope>ACTIVATION BY FGFR1</scope>
</reference>